<organism>
    <name type="scientific">Arabidopsis thaliana</name>
    <name type="common">Mouse-ear cress</name>
    <dbReference type="NCBI Taxonomy" id="3702"/>
    <lineage>
        <taxon>Eukaryota</taxon>
        <taxon>Viridiplantae</taxon>
        <taxon>Streptophyta</taxon>
        <taxon>Embryophyta</taxon>
        <taxon>Tracheophyta</taxon>
        <taxon>Spermatophyta</taxon>
        <taxon>Magnoliopsida</taxon>
        <taxon>eudicotyledons</taxon>
        <taxon>Gunneridae</taxon>
        <taxon>Pentapetalae</taxon>
        <taxon>rosids</taxon>
        <taxon>malvids</taxon>
        <taxon>Brassicales</taxon>
        <taxon>Brassicaceae</taxon>
        <taxon>Camelineae</taxon>
        <taxon>Arabidopsis</taxon>
    </lineage>
</organism>
<comment type="subcellular location">
    <subcellularLocation>
        <location>Plastid</location>
        <location>Chloroplast</location>
    </subcellularLocation>
</comment>
<comment type="similarity">
    <text evidence="4">Belongs to the bacterial ribosomal protein bL12 family.</text>
</comment>
<accession>P36211</accession>
<accession>Q9LK93</accession>
<dbReference type="EMBL" id="X68046">
    <property type="protein sequence ID" value="CAA48182.1"/>
    <property type="molecule type" value="Genomic_DNA"/>
</dbReference>
<dbReference type="EMBL" id="AP000371">
    <property type="protein sequence ID" value="BAB02530.1"/>
    <property type="molecule type" value="Genomic_DNA"/>
</dbReference>
<dbReference type="EMBL" id="CP002686">
    <property type="protein sequence ID" value="AEE77371.1"/>
    <property type="molecule type" value="Genomic_DNA"/>
</dbReference>
<dbReference type="PIR" id="B53394">
    <property type="entry name" value="B53394"/>
</dbReference>
<dbReference type="SMR" id="P36211"/>
<dbReference type="FunCoup" id="P36211">
    <property type="interactions" value="143"/>
</dbReference>
<dbReference type="STRING" id="3702.P36211"/>
<dbReference type="PaxDb" id="3702-AT3G27840.1"/>
<dbReference type="EnsemblPlants" id="AT3G27840.1">
    <property type="protein sequence ID" value="AT3G27840.1"/>
    <property type="gene ID" value="AT3G27840"/>
</dbReference>
<dbReference type="Gramene" id="AT3G27840.1">
    <property type="protein sequence ID" value="AT3G27840.1"/>
    <property type="gene ID" value="AT3G27840"/>
</dbReference>
<dbReference type="KEGG" id="ath:AT3G27840"/>
<dbReference type="Araport" id="AT3G27840"/>
<dbReference type="TAIR" id="AT3G27840">
    <property type="gene designation" value="RPL12-B"/>
</dbReference>
<dbReference type="eggNOG" id="KOG1715">
    <property type="taxonomic scope" value="Eukaryota"/>
</dbReference>
<dbReference type="HOGENOM" id="CLU_086499_1_2_1"/>
<dbReference type="InParanoid" id="P36211"/>
<dbReference type="OMA" id="FPIHGHR"/>
<dbReference type="OrthoDB" id="250175at2759"/>
<dbReference type="PhylomeDB" id="P36211"/>
<dbReference type="PRO" id="PR:P36211"/>
<dbReference type="Proteomes" id="UP000006548">
    <property type="component" value="Chromosome 3"/>
</dbReference>
<dbReference type="ExpressionAtlas" id="P36211">
    <property type="expression patterns" value="baseline and differential"/>
</dbReference>
<dbReference type="GO" id="GO:0009507">
    <property type="term" value="C:chloroplast"/>
    <property type="evidence" value="ECO:0007669"/>
    <property type="project" value="UniProtKB-SubCell"/>
</dbReference>
<dbReference type="GO" id="GO:0000311">
    <property type="term" value="C:plastid large ribosomal subunit"/>
    <property type="evidence" value="ECO:0000250"/>
    <property type="project" value="TAIR"/>
</dbReference>
<dbReference type="GO" id="GO:0003735">
    <property type="term" value="F:structural constituent of ribosome"/>
    <property type="evidence" value="ECO:0007669"/>
    <property type="project" value="InterPro"/>
</dbReference>
<dbReference type="GO" id="GO:0006412">
    <property type="term" value="P:translation"/>
    <property type="evidence" value="ECO:0000304"/>
    <property type="project" value="TAIR"/>
</dbReference>
<dbReference type="FunFam" id="3.30.1390.10:FF:000001">
    <property type="entry name" value="50S ribosomal protein L7/L12"/>
    <property type="match status" value="1"/>
</dbReference>
<dbReference type="Gene3D" id="3.30.1390.10">
    <property type="match status" value="1"/>
</dbReference>
<dbReference type="Gene3D" id="1.20.5.710">
    <property type="entry name" value="Single helix bin"/>
    <property type="match status" value="1"/>
</dbReference>
<dbReference type="HAMAP" id="MF_00368">
    <property type="entry name" value="Ribosomal_bL12"/>
    <property type="match status" value="1"/>
</dbReference>
<dbReference type="InterPro" id="IPR000206">
    <property type="entry name" value="Ribosomal_bL12"/>
</dbReference>
<dbReference type="InterPro" id="IPR013823">
    <property type="entry name" value="Ribosomal_bL12_C"/>
</dbReference>
<dbReference type="InterPro" id="IPR014719">
    <property type="entry name" value="Ribosomal_bL12_C/ClpS-like"/>
</dbReference>
<dbReference type="InterPro" id="IPR008932">
    <property type="entry name" value="Ribosomal_bL12_oligo"/>
</dbReference>
<dbReference type="InterPro" id="IPR036235">
    <property type="entry name" value="Ribosomal_bL12_oligo_N_sf"/>
</dbReference>
<dbReference type="NCBIfam" id="TIGR00855">
    <property type="entry name" value="L12"/>
    <property type="match status" value="1"/>
</dbReference>
<dbReference type="PANTHER" id="PTHR45987">
    <property type="entry name" value="39S RIBOSOMAL PROTEIN L12"/>
    <property type="match status" value="1"/>
</dbReference>
<dbReference type="PANTHER" id="PTHR45987:SF7">
    <property type="entry name" value="LARGE RIBOSOMAL SUBUNIT PROTEIN BL12CY"/>
    <property type="match status" value="1"/>
</dbReference>
<dbReference type="Pfam" id="PF00542">
    <property type="entry name" value="Ribosomal_L12"/>
    <property type="match status" value="1"/>
</dbReference>
<dbReference type="Pfam" id="PF16320">
    <property type="entry name" value="Ribosomal_L12_N"/>
    <property type="match status" value="1"/>
</dbReference>
<dbReference type="SUPFAM" id="SSF54736">
    <property type="entry name" value="ClpS-like"/>
    <property type="match status" value="1"/>
</dbReference>
<dbReference type="SUPFAM" id="SSF48300">
    <property type="entry name" value="Ribosomal protein L7/12, oligomerisation (N-terminal) domain"/>
    <property type="match status" value="1"/>
</dbReference>
<evidence type="ECO:0000255" key="1"/>
<evidence type="ECO:0000256" key="2">
    <source>
        <dbReference type="SAM" id="MobiDB-lite"/>
    </source>
</evidence>
<evidence type="ECO:0000303" key="3">
    <source>
    </source>
</evidence>
<evidence type="ECO:0000305" key="4"/>
<sequence>MAATTLSIATTIRSSSFSSGLASAHHFPSRPLSIEFPFSFGVSSSSTLSHRAIYLHPISAVKTPKKIKKIGSEISSLTLEESRILVDYVQDKFGVSILFSAPAAAALPPPLDNGGATASVERQTTFDVVINDVPRGNRIAVITAIRAMTSLSLSESKELIEGFPKKFKEGVTKDEAEEDKTQLEEAGAKVSIV</sequence>
<feature type="transit peptide" description="Chloroplast" evidence="1">
    <location>
        <begin position="1"/>
        <end position="59"/>
    </location>
</feature>
<feature type="chain" id="PRO_0000030449" description="Large ribosomal subunit protein bL12cy">
    <location>
        <begin position="60"/>
        <end position="193"/>
    </location>
</feature>
<feature type="region of interest" description="Disordered" evidence="2">
    <location>
        <begin position="170"/>
        <end position="193"/>
    </location>
</feature>
<feature type="compositionally biased region" description="Basic and acidic residues" evidence="2">
    <location>
        <begin position="170"/>
        <end position="187"/>
    </location>
</feature>
<feature type="sequence conflict" description="In Ref. 1; CAA48182." evidence="4" ref="1">
    <original>A</original>
    <variation>P</variation>
    <location>
        <position position="186"/>
    </location>
</feature>
<proteinExistence type="inferred from homology"/>
<keyword id="KW-0150">Chloroplast</keyword>
<keyword id="KW-0934">Plastid</keyword>
<keyword id="KW-1185">Reference proteome</keyword>
<keyword id="KW-0687">Ribonucleoprotein</keyword>
<keyword id="KW-0689">Ribosomal protein</keyword>
<keyword id="KW-0809">Transit peptide</keyword>
<name>RK122_ARATH</name>
<reference key="1">
    <citation type="journal article" date="1994" name="J. Biol. Chem.">
        <title>Multicopy GTPase center protein L12 of Arabidopsis chloroplast ribosome is encoded by a clustered nuclear gene family with the expressed members closely linked to tRNA(Pro) genes.</title>
        <authorList>
            <person name="Wegloehner W."/>
            <person name="Subramanian A.R."/>
        </authorList>
    </citation>
    <scope>NUCLEOTIDE SEQUENCE [GENOMIC DNA]</scope>
    <source>
        <strain>cv. Landsberg erecta</strain>
    </source>
</reference>
<reference key="2">
    <citation type="journal article" date="2000" name="DNA Res.">
        <title>Structural analysis of Arabidopsis thaliana chromosome 3. II. Sequence features of the 4,251,695 bp regions covered by 90 P1, TAC and BAC clones.</title>
        <authorList>
            <person name="Kaneko T."/>
            <person name="Katoh T."/>
            <person name="Sato S."/>
            <person name="Nakamura Y."/>
            <person name="Asamizu E."/>
            <person name="Tabata S."/>
        </authorList>
    </citation>
    <scope>NUCLEOTIDE SEQUENCE [LARGE SCALE GENOMIC DNA]</scope>
    <source>
        <strain>cv. Columbia</strain>
    </source>
</reference>
<reference key="3">
    <citation type="journal article" date="2017" name="Plant J.">
        <title>Araport11: a complete reannotation of the Arabidopsis thaliana reference genome.</title>
        <authorList>
            <person name="Cheng C.Y."/>
            <person name="Krishnakumar V."/>
            <person name="Chan A.P."/>
            <person name="Thibaud-Nissen F."/>
            <person name="Schobel S."/>
            <person name="Town C.D."/>
        </authorList>
    </citation>
    <scope>GENOME REANNOTATION</scope>
    <source>
        <strain>cv. Columbia</strain>
    </source>
</reference>
<reference key="4">
    <citation type="journal article" date="2023" name="Plant Cell">
        <title>An updated nomenclature for plant ribosomal protein genes.</title>
        <authorList>
            <person name="Scarpin M.R."/>
            <person name="Busche M."/>
            <person name="Martinez R.E."/>
            <person name="Harper L.C."/>
            <person name="Reiser L."/>
            <person name="Szakonyi D."/>
            <person name="Merchante C."/>
            <person name="Lan T."/>
            <person name="Xiong W."/>
            <person name="Mo B."/>
            <person name="Tang G."/>
            <person name="Chen X."/>
            <person name="Bailey-Serres J."/>
            <person name="Browning K.S."/>
            <person name="Brunkard J.O."/>
        </authorList>
    </citation>
    <scope>NOMENCLATURE</scope>
</reference>
<gene>
    <name type="primary">RPL12B</name>
    <name type="ordered locus">At3g27840</name>
    <name type="ORF">K16N12.20</name>
    <name type="ORF">K16N12.5</name>
</gene>
<protein>
    <recommendedName>
        <fullName evidence="3">Large ribosomal subunit protein bL12cy</fullName>
    </recommendedName>
    <alternativeName>
        <fullName>50S ribosomal protein L12-2, chloroplastic</fullName>
    </alternativeName>
    <alternativeName>
        <fullName>CL12-B</fullName>
    </alternativeName>
</protein>